<sequence>MGKPRGLRTARKHRSHRRDQRWHDKDYKKAHLGTRWKANPFGGASHAKGIVLEKVGVEAKQPNSAIRKCVRVQLIKNGKKITAFVPRDGCLNYIEENDEVLVAGFGRKGHAVGDIPGVRFKVVKVANVSLLALYKEKKERPRS</sequence>
<comment type="subunit">
    <text evidence="3">Component of the 40S small ribosomal subunit.</text>
</comment>
<comment type="subcellular location">
    <subcellularLocation>
        <location evidence="2">Cytoplasm</location>
        <location evidence="2">Cytosol</location>
    </subcellularLocation>
    <subcellularLocation>
        <location evidence="2">Cytoplasm</location>
    </subcellularLocation>
    <subcellularLocation>
        <location evidence="3">Rough endoplasmic reticulum</location>
    </subcellularLocation>
    <text evidence="2 3">Detected on cytosolic polysomes (By similarity). Detected in ribosomes that are associated with the rough endoplasmic reticulum (By similarity).</text>
</comment>
<comment type="similarity">
    <text evidence="5">Belongs to the universal ribosomal protein uS12 family.</text>
</comment>
<dbReference type="EMBL" id="AY245451">
    <property type="protein sequence ID" value="AAP04351.1"/>
    <property type="molecule type" value="mRNA"/>
</dbReference>
<dbReference type="SMR" id="Q86FP7"/>
<dbReference type="GO" id="GO:0022627">
    <property type="term" value="C:cytosolic small ribosomal subunit"/>
    <property type="evidence" value="ECO:0000250"/>
    <property type="project" value="UniProtKB"/>
</dbReference>
<dbReference type="GO" id="GO:0005791">
    <property type="term" value="C:rough endoplasmic reticulum"/>
    <property type="evidence" value="ECO:0007669"/>
    <property type="project" value="UniProtKB-SubCell"/>
</dbReference>
<dbReference type="GO" id="GO:0003735">
    <property type="term" value="F:structural constituent of ribosome"/>
    <property type="evidence" value="ECO:0007669"/>
    <property type="project" value="InterPro"/>
</dbReference>
<dbReference type="GO" id="GO:0002181">
    <property type="term" value="P:cytoplasmic translation"/>
    <property type="evidence" value="ECO:0000250"/>
    <property type="project" value="UniProtKB"/>
</dbReference>
<dbReference type="CDD" id="cd03367">
    <property type="entry name" value="Ribosomal_S23"/>
    <property type="match status" value="1"/>
</dbReference>
<dbReference type="FunFam" id="2.40.50.140:FF:000007">
    <property type="entry name" value="40S ribosomal protein S23"/>
    <property type="match status" value="1"/>
</dbReference>
<dbReference type="Gene3D" id="2.40.50.140">
    <property type="entry name" value="Nucleic acid-binding proteins"/>
    <property type="match status" value="1"/>
</dbReference>
<dbReference type="InterPro" id="IPR012340">
    <property type="entry name" value="NA-bd_OB-fold"/>
</dbReference>
<dbReference type="InterPro" id="IPR006032">
    <property type="entry name" value="Ribosomal_uS12"/>
</dbReference>
<dbReference type="InterPro" id="IPR005680">
    <property type="entry name" value="Ribosomal_uS12_euk/arc"/>
</dbReference>
<dbReference type="NCBIfam" id="TIGR00982">
    <property type="entry name" value="uS12_E_A"/>
    <property type="match status" value="1"/>
</dbReference>
<dbReference type="PANTHER" id="PTHR11652">
    <property type="entry name" value="30S RIBOSOMAL PROTEIN S12 FAMILY MEMBER"/>
    <property type="match status" value="1"/>
</dbReference>
<dbReference type="Pfam" id="PF00164">
    <property type="entry name" value="Ribosom_S12_S23"/>
    <property type="match status" value="1"/>
</dbReference>
<dbReference type="PIRSF" id="PIRSF002133">
    <property type="entry name" value="Ribosomal_S12/S23"/>
    <property type="match status" value="1"/>
</dbReference>
<dbReference type="SUPFAM" id="SSF50249">
    <property type="entry name" value="Nucleic acid-binding proteins"/>
    <property type="match status" value="1"/>
</dbReference>
<dbReference type="PROSITE" id="PS00055">
    <property type="entry name" value="RIBOSOMAL_S12"/>
    <property type="match status" value="1"/>
</dbReference>
<gene>
    <name type="primary">RpS23</name>
</gene>
<evidence type="ECO:0000250" key="1"/>
<evidence type="ECO:0000250" key="2">
    <source>
        <dbReference type="UniProtKB" id="P62266"/>
    </source>
</evidence>
<evidence type="ECO:0000250" key="3">
    <source>
        <dbReference type="UniProtKB" id="Q6SA96"/>
    </source>
</evidence>
<evidence type="ECO:0000256" key="4">
    <source>
        <dbReference type="SAM" id="MobiDB-lite"/>
    </source>
</evidence>
<evidence type="ECO:0000305" key="5"/>
<protein>
    <recommendedName>
        <fullName evidence="5">Small ribosomal subunit protein uS12</fullName>
    </recommendedName>
    <alternativeName>
        <fullName>40S ribosomal protein S23</fullName>
    </alternativeName>
</protein>
<accession>Q86FP7</accession>
<feature type="chain" id="PRO_0000146464" description="Small ribosomal subunit protein uS12">
    <location>
        <begin position="1"/>
        <end position="143"/>
    </location>
</feature>
<feature type="region of interest" description="Disordered" evidence="4">
    <location>
        <begin position="1"/>
        <end position="26"/>
    </location>
</feature>
<feature type="compositionally biased region" description="Basic residues" evidence="4">
    <location>
        <begin position="1"/>
        <end position="20"/>
    </location>
</feature>
<feature type="modified residue" description="Hydroxyproline" evidence="1">
    <location>
        <position position="62"/>
    </location>
</feature>
<keyword id="KW-0963">Cytoplasm</keyword>
<keyword id="KW-0256">Endoplasmic reticulum</keyword>
<keyword id="KW-0379">Hydroxylation</keyword>
<keyword id="KW-0687">Ribonucleoprotein</keyword>
<keyword id="KW-0689">Ribosomal protein</keyword>
<proteinExistence type="evidence at transcript level"/>
<reference key="1">
    <citation type="submission" date="2003-02" db="EMBL/GenBank/DDBJ databases">
        <title>Cloning of Dermacentor variabilis 40S ribosomal protein S23 mRNA.</title>
        <authorList>
            <person name="Simser J.A."/>
            <person name="Mulenga A."/>
            <person name="Macaluso K.R."/>
            <person name="Azad A.F."/>
        </authorList>
    </citation>
    <scope>NUCLEOTIDE SEQUENCE [MRNA]</scope>
</reference>
<name>RS23_DERVA</name>
<organism>
    <name type="scientific">Dermacentor variabilis</name>
    <name type="common">American dog tick</name>
    <dbReference type="NCBI Taxonomy" id="34621"/>
    <lineage>
        <taxon>Eukaryota</taxon>
        <taxon>Metazoa</taxon>
        <taxon>Ecdysozoa</taxon>
        <taxon>Arthropoda</taxon>
        <taxon>Chelicerata</taxon>
        <taxon>Arachnida</taxon>
        <taxon>Acari</taxon>
        <taxon>Parasitiformes</taxon>
        <taxon>Ixodida</taxon>
        <taxon>Ixodoidea</taxon>
        <taxon>Ixodidae</taxon>
        <taxon>Rhipicephalinae</taxon>
        <taxon>Dermacentor</taxon>
    </lineage>
</organism>